<sequence length="108" mass="12684">MADPRVRQIKIKTGVVKRLVKEKVMYEKEAKQQEEKIEKMRAEDGENYAIKKQAEILQESRMMIPDCQRRLEAACTDLQQILESEKDLEEAEEYKEARLVLDSVKLEA</sequence>
<protein>
    <recommendedName>
        <fullName>Tubulin-specific chaperone A</fullName>
    </recommendedName>
    <alternativeName>
        <fullName>TCP1-chaperonin cofactor A</fullName>
    </alternativeName>
    <alternativeName>
        <fullName>Tubulin-folding cofactor A</fullName>
        <shortName>CFA</shortName>
    </alternativeName>
</protein>
<reference key="1">
    <citation type="journal article" date="1996" name="Biochemistry">
        <title>Cofactor A is a molecular chaperone required for beta-tubulin folding: functional and structural characterization.</title>
        <authorList>
            <person name="Melki R."/>
            <person name="Rommelaere H."/>
            <person name="Leguy R."/>
            <person name="Vandekerckhove J."/>
            <person name="Ampe C."/>
        </authorList>
    </citation>
    <scope>PROTEIN SEQUENCE OF 2-108</scope>
    <scope>ACETYLATION AT ALA-2</scope>
    <source>
        <tissue>Reticulocyte</tissue>
    </source>
</reference>
<gene>
    <name type="primary">TBCA</name>
</gene>
<dbReference type="SMR" id="P80584"/>
<dbReference type="FunCoup" id="P80584">
    <property type="interactions" value="1169"/>
</dbReference>
<dbReference type="STRING" id="9986.ENSOCUP00000022954"/>
<dbReference type="iPTMnet" id="P80584"/>
<dbReference type="PaxDb" id="9986-ENSOCUP00000022954"/>
<dbReference type="eggNOG" id="KOG3470">
    <property type="taxonomic scope" value="Eukaryota"/>
</dbReference>
<dbReference type="InParanoid" id="P80584"/>
<dbReference type="Proteomes" id="UP000001811">
    <property type="component" value="Unplaced"/>
</dbReference>
<dbReference type="GO" id="GO:0005829">
    <property type="term" value="C:cytosol"/>
    <property type="evidence" value="ECO:0007669"/>
    <property type="project" value="TreeGrafter"/>
</dbReference>
<dbReference type="GO" id="GO:0005874">
    <property type="term" value="C:microtubule"/>
    <property type="evidence" value="ECO:0007669"/>
    <property type="project" value="UniProtKB-KW"/>
</dbReference>
<dbReference type="GO" id="GO:0048487">
    <property type="term" value="F:beta-tubulin binding"/>
    <property type="evidence" value="ECO:0007669"/>
    <property type="project" value="InterPro"/>
</dbReference>
<dbReference type="GO" id="GO:0007023">
    <property type="term" value="P:post-chaperonin tubulin folding pathway"/>
    <property type="evidence" value="ECO:0007669"/>
    <property type="project" value="InterPro"/>
</dbReference>
<dbReference type="GO" id="GO:0007021">
    <property type="term" value="P:tubulin complex assembly"/>
    <property type="evidence" value="ECO:0007669"/>
    <property type="project" value="InterPro"/>
</dbReference>
<dbReference type="FunFam" id="1.20.58.90:FF:000009">
    <property type="entry name" value="Tubulin-specific chaperone A"/>
    <property type="match status" value="1"/>
</dbReference>
<dbReference type="Gene3D" id="1.20.58.90">
    <property type="match status" value="1"/>
</dbReference>
<dbReference type="InterPro" id="IPR004226">
    <property type="entry name" value="TBCA"/>
</dbReference>
<dbReference type="InterPro" id="IPR036126">
    <property type="entry name" value="TBCA_sf"/>
</dbReference>
<dbReference type="PANTHER" id="PTHR21500">
    <property type="entry name" value="TUBULIN-SPECIFIC CHAPERONE A"/>
    <property type="match status" value="1"/>
</dbReference>
<dbReference type="PANTHER" id="PTHR21500:SF0">
    <property type="entry name" value="TUBULIN-SPECIFIC CHAPERONE A"/>
    <property type="match status" value="1"/>
</dbReference>
<dbReference type="Pfam" id="PF02970">
    <property type="entry name" value="TBCA"/>
    <property type="match status" value="1"/>
</dbReference>
<dbReference type="SUPFAM" id="SSF46988">
    <property type="entry name" value="Tubulin chaperone cofactor A"/>
    <property type="match status" value="1"/>
</dbReference>
<proteinExistence type="evidence at protein level"/>
<organism>
    <name type="scientific">Oryctolagus cuniculus</name>
    <name type="common">Rabbit</name>
    <dbReference type="NCBI Taxonomy" id="9986"/>
    <lineage>
        <taxon>Eukaryota</taxon>
        <taxon>Metazoa</taxon>
        <taxon>Chordata</taxon>
        <taxon>Craniata</taxon>
        <taxon>Vertebrata</taxon>
        <taxon>Euteleostomi</taxon>
        <taxon>Mammalia</taxon>
        <taxon>Eutheria</taxon>
        <taxon>Euarchontoglires</taxon>
        <taxon>Glires</taxon>
        <taxon>Lagomorpha</taxon>
        <taxon>Leporidae</taxon>
        <taxon>Oryctolagus</taxon>
    </lineage>
</organism>
<keyword id="KW-0007">Acetylation</keyword>
<keyword id="KW-0143">Chaperone</keyword>
<keyword id="KW-0963">Cytoplasm</keyword>
<keyword id="KW-0206">Cytoskeleton</keyword>
<keyword id="KW-0903">Direct protein sequencing</keyword>
<keyword id="KW-0493">Microtubule</keyword>
<keyword id="KW-1185">Reference proteome</keyword>
<evidence type="ECO:0000269" key="1">
    <source>
    </source>
</evidence>
<evidence type="ECO:0000305" key="2"/>
<feature type="initiator methionine" description="Removed" evidence="1">
    <location>
        <position position="1"/>
    </location>
</feature>
<feature type="chain" id="PRO_0000080041" description="Tubulin-specific chaperone A">
    <location>
        <begin position="2"/>
        <end position="108"/>
    </location>
</feature>
<feature type="modified residue" description="N-acetylalanine" evidence="1">
    <location>
        <position position="2"/>
    </location>
</feature>
<accession>P80584</accession>
<name>TBCA_RABIT</name>
<comment type="function">
    <text>Tubulin-folding protein; involved in the early step of the tubulin folding pathway.</text>
</comment>
<comment type="subunit">
    <text>Supercomplex made of cofactors A to E. Cofactors A and D function by capturing and stabilizing tubulin in a quasi-native conformation. Cofactor E binds to the cofactor D-tubulin complex; interaction with cofactor C then causes the release of tubulin polypeptides that are committed to the native state.</text>
</comment>
<comment type="subcellular location">
    <subcellularLocation>
        <location>Cytoplasm</location>
        <location>Cytoskeleton</location>
    </subcellularLocation>
</comment>
<comment type="similarity">
    <text evidence="2">Belongs to the TBCA family.</text>
</comment>